<accession>C7ZBE4</accession>
<gene>
    <name evidence="5" type="primary">NRPS30</name>
    <name type="synonym">NPS5</name>
    <name type="ORF">NECHADRAFT_106280</name>
</gene>
<reference key="1">
    <citation type="journal article" date="2009" name="PLoS Genet.">
        <title>The genome of Nectria haematococca: contribution of supernumerary chromosomes to gene expansion.</title>
        <authorList>
            <person name="Coleman J.J."/>
            <person name="Rounsley S.D."/>
            <person name="Rodriguez-Carres M."/>
            <person name="Kuo A."/>
            <person name="Wasmann C.C."/>
            <person name="Grimwood J."/>
            <person name="Schmutz J."/>
            <person name="Taga M."/>
            <person name="White G.J."/>
            <person name="Zhou S."/>
            <person name="Schwartz D.C."/>
            <person name="Freitag M."/>
            <person name="Ma L.-J."/>
            <person name="Danchin E.G.J."/>
            <person name="Henrissat B."/>
            <person name="Coutinho P.M."/>
            <person name="Nelson D.R."/>
            <person name="Straney D."/>
            <person name="Napoli C.A."/>
            <person name="Barker B.M."/>
            <person name="Gribskov M."/>
            <person name="Rep M."/>
            <person name="Kroken S."/>
            <person name="Molnar I."/>
            <person name="Rensing C."/>
            <person name="Kennell J.C."/>
            <person name="Zamora J."/>
            <person name="Farman M.L."/>
            <person name="Selker E.U."/>
            <person name="Salamov A."/>
            <person name="Shapiro H."/>
            <person name="Pangilinan J."/>
            <person name="Lindquist E."/>
            <person name="Lamers C."/>
            <person name="Grigoriev I.V."/>
            <person name="Geiser D.M."/>
            <person name="Covert S.F."/>
            <person name="Temporini E."/>
            <person name="VanEtten H.D."/>
        </authorList>
    </citation>
    <scope>NUCLEOTIDE SEQUENCE [LARGE SCALE GENOMIC DNA]</scope>
    <source>
        <strain>ATCC MYA-4622 / CBS 123669 / FGSC 9596 / NRRL 45880 / 77-13-4</strain>
    </source>
</reference>
<reference key="2">
    <citation type="journal article" date="2016" name="Curr. Genet.">
        <title>Identification of the non-ribosomal peptide synthetase responsible for biosynthesis of the potential anti-cancer drug sansalvamide in Fusarium solani.</title>
        <authorList>
            <person name="Romans-Fuertes P."/>
            <person name="Sondergaard T.E."/>
            <person name="Sandmann M.I."/>
            <person name="Wollenberg R.D."/>
            <person name="Nielsen K.F."/>
            <person name="Hansen F.T."/>
            <person name="Giese H."/>
            <person name="Brodersen D.E."/>
            <person name="Soerensen J.L."/>
        </authorList>
    </citation>
    <scope>FUNCTION</scope>
    <scope>DOMAIN</scope>
    <scope>DISRUPTION PHENOTYPE</scope>
    <scope>PATHWAY</scope>
</reference>
<name>SAN1_FUSV7</name>
<organism>
    <name type="scientific">Fusarium vanettenii (strain ATCC MYA-4622 / CBS 123669 / FGSC 9596 / NRRL 45880 / 77-13-4)</name>
    <name type="common">Fusarium solani subsp. pisi</name>
    <dbReference type="NCBI Taxonomy" id="660122"/>
    <lineage>
        <taxon>Eukaryota</taxon>
        <taxon>Fungi</taxon>
        <taxon>Dikarya</taxon>
        <taxon>Ascomycota</taxon>
        <taxon>Pezizomycotina</taxon>
        <taxon>Sordariomycetes</taxon>
        <taxon>Hypocreomycetidae</taxon>
        <taxon>Hypocreales</taxon>
        <taxon>Nectriaceae</taxon>
        <taxon>Fusarium</taxon>
        <taxon>Fusarium solani species complex</taxon>
        <taxon>Fusarium vanettenii</taxon>
    </lineage>
</organism>
<feature type="chain" id="PRO_0000450716" description="Nonribosomal peptide synthetase 30">
    <location>
        <begin position="1"/>
        <end position="5911"/>
    </location>
</feature>
<feature type="domain" description="Carrier 1" evidence="2 7">
    <location>
        <begin position="891"/>
        <end position="968"/>
    </location>
</feature>
<feature type="domain" description="Carrier 2" evidence="2 7">
    <location>
        <begin position="2001"/>
        <end position="2077"/>
    </location>
</feature>
<feature type="domain" description="Carrier 3" evidence="2 7">
    <location>
        <begin position="3110"/>
        <end position="3186"/>
    </location>
</feature>
<feature type="domain" description="Carrier 4" evidence="2 7">
    <location>
        <begin position="4248"/>
        <end position="4325"/>
    </location>
</feature>
<feature type="domain" description="Carrier 5" evidence="2 7">
    <location>
        <begin position="5360"/>
        <end position="5436"/>
    </location>
</feature>
<feature type="region of interest" description="Disordered" evidence="3">
    <location>
        <begin position="1"/>
        <end position="22"/>
    </location>
</feature>
<feature type="region of interest" description="Adenylation 1" evidence="1 7">
    <location>
        <begin position="352"/>
        <end position="754"/>
    </location>
</feature>
<feature type="region of interest" description="Condensation 1" evidence="1 7">
    <location>
        <begin position="1007"/>
        <end position="1422"/>
    </location>
</feature>
<feature type="region of interest" description="Adenylation 2" evidence="1 7">
    <location>
        <begin position="1467"/>
        <end position="1865"/>
    </location>
</feature>
<feature type="region of interest" description="Condensation 2" evidence="1 7">
    <location>
        <begin position="2121"/>
        <end position="2538"/>
    </location>
</feature>
<feature type="region of interest" description="Adenylation 3" evidence="1 7">
    <location>
        <begin position="2568"/>
        <end position="2977"/>
    </location>
</feature>
<feature type="region of interest" description="Condensation 3" evidence="1 7">
    <location>
        <begin position="3227"/>
        <end position="3652"/>
    </location>
</feature>
<feature type="region of interest" description="Adenylation 4" evidence="1 7">
    <location>
        <begin position="3701"/>
        <end position="4108"/>
    </location>
</feature>
<feature type="region of interest" description="Disordered" evidence="3">
    <location>
        <begin position="4326"/>
        <end position="4347"/>
    </location>
</feature>
<feature type="region of interest" description="Condensation 4" evidence="1 7">
    <location>
        <begin position="4353"/>
        <end position="4793"/>
    </location>
</feature>
<feature type="region of interest" description="Adenylation 5" evidence="1 7">
    <location>
        <begin position="4819"/>
        <end position="5231"/>
    </location>
</feature>
<feature type="region of interest" description="Condensation 5" evidence="1 7">
    <location>
        <begin position="5474"/>
        <end position="5828"/>
    </location>
</feature>
<feature type="modified residue" description="O-(pantetheine 4'-phosphoryl)serine" evidence="2">
    <location>
        <position position="928"/>
    </location>
</feature>
<feature type="modified residue" description="O-(pantetheine 4'-phosphoryl)serine" evidence="2">
    <location>
        <position position="2038"/>
    </location>
</feature>
<feature type="modified residue" description="O-(pantetheine 4'-phosphoryl)serine" evidence="2">
    <location>
        <position position="3147"/>
    </location>
</feature>
<feature type="modified residue" description="O-(pantetheine 4'-phosphoryl)serine" evidence="2">
    <location>
        <position position="4285"/>
    </location>
</feature>
<feature type="modified residue" description="O-(pantetheine 4'-phosphoryl)serine" evidence="2">
    <location>
        <position position="5397"/>
    </location>
</feature>
<sequence>MVPEKPTAQSKSGIGEPFRAGDAAGLHIPTSEINSTYLDDTFPSLFSTMHQFRENDAVKAYPSGGIEKFGDIRATVQPVSSGSSDTSSSDDSQQLQHAVEYWKDILADGKFVSYPSPPASTQQRSSLSGLAPHAVEQLQLPLPKHSKVPPATLMRAAWALVAGRMTDSESIVFGTNVLDEPILSAVPFRAHIHGHTVSSFIESVQKQEEEVMASPHQLTLLFSGMEQASTLFQTLLLIPSDEEYSNSPQDSGCRTPEPCGFGLVLEIAHTQDRASLKVTARYRSDTLQAFEVKRLLHRFASVMAQLDTVKPDQSVDEIDFMTEQDFQDIWAWNSKAPAAINGFIHDIVKEKALIQPSSTAVYAWDGEFTYAEIDRHSNRLAVTLITGYGVQPGTPIALCFEKSKWMAVSMLGVLKAGAYFVMLDAASAPEQRLRTMVEQVQARLVISSPLNQALSSRICAAVVTLDSQTLRECKYNDDEIDRLLHQQLLTSSSNALAHVIFTSGSTGTPKAIPTTHQSIRSALHHQVAAIHLNTKSRVYDFSSYSFDAAIFNIWATFYAGGCLCVPSEADRKDDLVGSFQRLGANHVIMTPSAAQLLASAPEKVPQLETIMLVGERLTIQDVLPWWNRVCLINSYGPCECTPLGTSNLNPSSPTDLLDIGVGLGQVTWIVDPDDHNRLVPPGLIGELVLEGPSVSQGYLNDPERTAAAFVKDPAWLVERGRHGKVYKTGDLVQYSNEQGRLKYIGRKDAQVKIRGQRVELGEVEHRVQQCMPDVSQVVVEMITPKSGNNLSSAMLAAFLVPSRGSGKEVSEPRMAQSIPQIYAVSEEVQSALSKALPSYMVPSVFFSVRDLPKAASSGKLDRKKIREMGSSFSVKQLADLRTNAQGPKRQPRPFSVEYSLQGIWASVLNMERSDIGLNDSFFQLGGDSISAMKVVRDAREQLEVELSVADILQHPRLSEAAAIVARGTKLFKSDEVPAAFSLLPGNNAREAIDPALKSHGVQSLSVEDAFPCTPLQEGLVFLSLKSPGDYIMQTTLDLSTSSYSNAHKFRQAWEHVVAEHPALRTRFVHSDGETGLAQVVLRPEAFAWNEVANSSLNEYLETDRRQPMSLGQAFARCALVHDKGAPRWFVWTMHHALYDGWSIRLIMNAFQRAYRSLEAGSNLVTGTTNASYPAFIKYILSQSVSADGSMAKYWKKTLSDCEAAQFPAVPLHVQNQAPDHDKINTLFQDLPSMTKKQGISNATPSTLIRAAWALVVRSMTNSDDVVFGVTVSGRSAPVAAIDEVPGPTMATVPFRSILAKNMLVGDYLRSVQQQAIDMIPFEQIGLPRIAKLSADCEHACRFQTLLVVQPEETADILSEFDDEHGGPERWFNNTYALLLEVQLGDKKANSSGAVKARFDSRIIQANTVKSLLERLIFVIDQLSGADNMARVLSDIDVVTPVDLEQIWQWNKTVPATIDRNVHDMILERALSQPDRPVVLAWDGELTYGELTRLSSTLARRLIDQYGVRPGDIVGLCFEKSKWTSVAILAVLQAGAGFAMLDPFLPETRLQTIVDQVNALVVVSSPKQRDLSLQLGCDQVLHLASDLFSEPETALVNVKTDPSSPVYIIFTSGSTGTPKGSIISHRSLASSLVHQREGCGFSQSSRVYDFSSYGFDAPLFLAFQTFSAGGCLCVPSDEDRKSRLAESLRELKATFALIPPSASQLVSPEQVPDLKTLIVGGEASTVKDLERWSSADLMLINAYGPCECTAVSMINPTHTSNMSVRKALAIGKGLGQVTWVVDPQDHSRLVSPGAVGELLLEGPYIGQGYLNNEEKTREAYVKDPAWLLQGTGKVPGRRGRLYKTGDLVQYSEDGDGSLMFVGRKADDAQVKIRGQRAELGEIELRVQQALKYDKTVQEVVVDVIVPHGEGSRPMLVAFLKTTDVKDTSATPDLYRVSSAFEDELAQSLPSYMIPEAFFKLAGIPQTATGKLHRMRLRAMGASYSLRQLADLRTEATQGPKPQPTSELEAEMQQIWARVLSFEPERIGLDDSFFRLGGDSIAAMKAVGEATKASIRVTVADFFEHRTLRNICSHSYYCSEMAAESLSIAVESFSLLAPDSIETREKLVQGLAAQLRTTTSRIQDAYPCTPLQEGLVSLASKRTGDYIMQQVLELSPDMLNNIDTFKDAWQKAVHAVPVLRTRIVQHEKLGLLQVLLNHQDEGIEWTEAMGLDWYLKSDRQKPMGLGQPLARYALVRDRTGRPKWFVWTVHHALYDGLSLPMILEEVDRTMQGQSVEQARPQAQAFIKYIQQHDSNELKSYWQATLGDSGECVSYPSLPSGLERPIMSNNLIEHQIPRAWVSSSSNETTVSTMLRAAWGLVTSQMTGSDDVVFGATVSGRNAPVVGVESMAFPTIATVPLRLKLNRKDQRVVDYLDQVQRQATEMIPYEQAGLQRIAQLVSPGARQACAFQTLLVVQPKSKTESTKTSQLGEWTTPDQTEWFTTYPLTIEATVSLSQIDVDARFDSRVVEPWMVKGLLERLDFVMQQLGQAGPDINMSDIGIMTPGGLQQIWKWNEKVPDPVDRSIHSVIEEQARLRPEAAAICAWDGNLTYAELNSFSSRLAFYLIALTGGKSLKETFVPLCFDKSMWTPVAMLGVLKTGAGFVLLDSALPEQRLRHIVEKVGAGQLMLSSDSCSSLSGRISQGVVTINSDFFKLAAQTIARLPVASADSAAYVIFTSGSTGTPKGVVITHRNLASALPYHVKRLGYTPDSRVYEFASYSFGASLNNMFTALTTGSCLCIPSDHERRSQLDRSLVSMNATHVLLTPSVAESLAPRSVSGLKSIIFGGEAVRSQDVGPWWEAGIKVCTAYGSSECTTISTINDTASTPDEATRIGWGVGLVPWVVDPSDHEKLLPPGCIGELLLEGPAVGRGYLSDPEKTAEVFIQSPSWLTRGIPAANNDNHSQKGRSGRLYKTGDLVRYNEDGSLSFFGRKDSQVKIRGQRVELGEVEHRVKERVSEAAQVVVEAIIPTGSDSAHQTLAAFLVMKEETERPASDDDKPTIIPISAGVEDMLSQNLPVYMVPTVFFSMKKLPMTATGKMNRRVLRQIGSSFSAKQFAAARKTREQGTPSQEQPSTNAQRELQQIWSRILDLPTDLIGLDDGFFSLGGDSVSAMKVVGEARKAGIELAVADIFTHRTLRLIADNSKSIKREGDQTVANIIPPFSLIGNEVDIEALRQNISTQCDIDTSKVQDAYPCTPLQEGLISLASKRPGDYVMQAVLELSSEVSITKFQAAWEETTKTIDVLRTRIVHCQGYEKLGLLQVILDSSVNWINATGLESYLQADRKQVMGLNDPLARYALVYDGQTDRPRWFVWTVHHAIYDGWSLPLVLDTVAKAYQGETNAGSQSLTGASGFQPFIKYLEEQQRNPEGVKKTEDYWKRYFDSCEATQFPTLPSPSYEPTSNKTTLYRMKVNSPSSSTSLNLTPSTIIRAAWALVVGQMTNTSDVVFGTTVSGRNAPVQTIEMMPAPTLATVPLRVKWTSGQAILGYLETVQREATEMIAFEQTGLHRIAKMSSDARQACQFQTLLVIQSQGHDEDESTGSLVQNELGSSPFGEWVNQDQNEWFNPYALMIEAQPGSQGDSFTLTANYDEKTIQEWIVLKLLKRLELVIQAFMAESYGQGQMVSKTIDELGGSIMTEDDLEQIWTWNQSTPEAVDKYVHEMVEERVREQPNAPAVHAWDGRLTYKELDQLAEKMAAQLLSSIDTGARLSSPRVIPLCFTKSMWTSVAMYGVLKAGGAFVLLDPMVPEQRLKTIVEQVGADVVLSSESEADLAKRLCPHVIQVGLSLSTGPSPTTQRLKGSQRHLSPHAPMFAVFTSGSTGVPKGVLLSHRNFASEIKHHSHLLGFHKNSRVFDFASHAFDAAVHNVFATFANGACLCVPSEKDRKNNIGGVMASMRVTVADLTPTVARLLDPTTLPDIETMILAGEAVSAEDAARWWRDSTRVVNGYGPSECTVMSTINAYPTSPEDASSIGLGAGHTTWVVDPNNHNILVAPGCIGELLLEGPLVGQGYLNDPAKTAASFIEDPTWLLKGSSTRPGRRGRLYKSGDLVKYREDGRFWFMGRKDSQVKIRGQRIELEEVERQVQASWSGDDISQIAAEVIKPQGQGSKPMLAAFIVSKDHQLSDDGPPEKAVKPVPVDPEIEARLAERLPAAMVPSVFFFYMRSHLPQTATGKTHRKLLREIGSSFSFQHLAEVANQVQDDENETKARRPPTTPLECQMQAIWVRILGISPDRISLDDSFIRLGGDSIAAMKVVGEARKHGSLDITVADLLRRPKLCDIIATMTKNKATGASRRLPRDDDEPIPHTKYAGPVDQSYAQGRLWFLDRLYPGLTWCLMPFTARFRGILRLDALHIALQAVENRHEALRTTFMSRDNVDLQEIHPFIPRELKLVELPRGAKGEESLQRALFKERTTPLDLSTETGWRVTVYRLGPEEENHHVLSILMHHIISDGWSLNVLRRELDIFYAAAVNSLDPLSQIDPLPIQYRDYASWQKQRFHQDEYQRQLDYWVSQLQTSRPAEFLCDKPRPDTLSGGAGVHEFTIANTMYDRLQKFCAEAEVTPFVVLLAAFRATHFRLTGVDDATIGTANANRDRWEVKELIGFFVNLQCLRIKMEQGVSFEDLVQQVQETAAASFDNQHVPFEKIVSQLNTPRDLSRHPLVQVIFALHSRGTSGPVKLGDDLESEMLDPIPTSQFDLEFHVFDDGDCLTANVVYSQDLFETETINSMVSVFNNLLDRALSEPKTAISSLPLLTEDGRLKLETWGLTKIDRTNYPRDSSIVDLFKEQVSRHPNRVAVKGNSSSQLTYAELDRKSDTLARWLLKQQPEFAPESMIGVMAHRSCEEIIALFGILKANMAHLPLNHNTPTGRVETILSAIQGPKRLLLLGQDVAPPAVNLDNIEMVRIADTLEEEAPRSWWKRAVVQALPRPKPTSLAYVLFTSGSTGKPKGVMVEHRGVSRLCRDNNIIRHLPSSGGFGHFLNISFDGSSLEVYFAILNGLTLVCVDEITILDAIALQGVFERENVRAVLFTPALLKQILRVNPTTLGTLDLLCVGGDRLDPADCVKAYKHTAQGAKVLNLYGPTENSVVSTVFCYEGQDEGFATGTAPIGEPISNSGALVMDSQQRLVPLGVIGEIVVTGDGVARGYTDPSRDVDRFIRLDGGKGERAYRTGDYARWRPVDGKIEFMGRMDVQVKIRGHRVELGEIEHAIRGHEAVHDVVVLAYRDEKDGGEPRLVGFVTLHDTSKEDVEVKEVEHKDGEGETKQHVHQELEARLRANLPTYMIPQTITILERMPLNASGKVDRVALSLTITPKTKARAAGVALRKPTTDMEVALRKIWAQVLDLDPETIGLDDNFFDIGGHSILAMRAVSEARKVDIELTVADIFRSKCLEALARRQEEIVGGPNTEEEEEVELIDSNTKAALLKDLDSLKATIHSTQVEDMLPLTSMQEHYVTTGVASGEYAHYFYLDLGANPDVSRIEKACRLTLAKIPILRASFMRLLGQHWQVIPRDVPARLQTVNTIHVNGDLDRAADDFCLRNWDNISAAEPPALFTLLKHRTQGTRLVIRLSHAQYDGVCFPPIVRAIIEGYTTGDVTPLPSFTKFLSGAARQRPQSLEYWSRLLRGSSLTTILPRLRLSNSSRALTPPRPIAAELDVALPQRLPSSITPAIVASAAWSILLSQISGKQDVVFGHVVAGRNSSISRIDEIVGPCLNLVPVRATLTESLTATELLQSLQTQFFTMGSADSVGFKDIMHESSNWPSNSDFESVLHHANVDEHPEFDFDGIKMKLHFFTNPRLIVSRLALASYPTKGGECLQFRLTASTDKLSDVQAKMLLDALCKIIRGFGESANVPVLSWIGQVGLRLSFTLMDYSSFPL</sequence>
<keyword id="KW-0413">Isomerase</keyword>
<keyword id="KW-0436">Ligase</keyword>
<keyword id="KW-0596">Phosphopantetheine</keyword>
<keyword id="KW-0597">Phosphoprotein</keyword>
<keyword id="KW-1185">Reference proteome</keyword>
<keyword id="KW-0677">Repeat</keyword>
<keyword id="KW-0843">Virulence</keyword>
<comment type="function">
    <text evidence="4 7">Nonribosomal peptide synthetase; part of the gene cluster that mediates the biosynthesis of sansalvamide, a cyclic pentadepsipeptide that shows promising results as potential anti-cancer drug (PubMed:26936154). The nonribosmal peptide synthetase NRPS30 produces sansalvamide by incorporating successively one phenylalanine, one leucine, one alpha-hydroxyisocaproic acid (HICA), one valine and one leucine before sansalvamide is released from by cyclization by the terminal C domain of NRPS30 (PubMed:26936154). The HICA residue is probably provided by reduction of alpha-ketoisocaproate by the cluster-specific aldo-keto reductase (NECHADRAFT_45914) (Probable).</text>
</comment>
<comment type="pathway">
    <text evidence="4">Secondary metabolite biosynthesis.</text>
</comment>
<comment type="domain">
    <text evidence="7">NRP synthetases are composed of discrete domains (adenylation (A), thiolation (T) or peptidyl carrier protein (PCP) and condensation (C) domains) which when grouped together are referred to as a single module. Each module is responsible for the recognition (via the A domain) and incorporation of a single amino acid into the growing peptide product. Thus, an NRP synthetase is generally composed of one or more modules and can terminate in a thioesterase domain (TE) that releases the newly synthesized peptide from the enzyme. Occasionally, epimerase (E) domains (responsible for L- to D-amino acid conversion) are present within the NRP synthetase. NRPS30 has the following pentamodular architecture: A1-T1-C1-A2-T2-C2-A3-T3-C3-A4-T4-C4-A5-T5-C5.</text>
</comment>
<comment type="disruption phenotype">
    <text evidence="4">Abolishes the production of sansalvamide.</text>
</comment>
<comment type="similarity">
    <text evidence="6">Belongs to the NRP synthetase family.</text>
</comment>
<dbReference type="EC" id="6.3.2.-" evidence="4"/>
<dbReference type="EMBL" id="GG698914">
    <property type="protein sequence ID" value="EEU38841.1"/>
    <property type="molecule type" value="Genomic_DNA"/>
</dbReference>
<dbReference type="SMR" id="C7ZBE4"/>
<dbReference type="STRING" id="660122.C7ZBE4"/>
<dbReference type="EnsemblFungi" id="NechaT106280">
    <property type="protein sequence ID" value="NechaP106280"/>
    <property type="gene ID" value="NechaG106280"/>
</dbReference>
<dbReference type="KEGG" id="nhe:NECHADRAFT_106280"/>
<dbReference type="VEuPathDB" id="FungiDB:NECHADRAFT_106280"/>
<dbReference type="eggNOG" id="KOG1176">
    <property type="taxonomic scope" value="Eukaryota"/>
</dbReference>
<dbReference type="eggNOG" id="KOG1178">
    <property type="taxonomic scope" value="Eukaryota"/>
</dbReference>
<dbReference type="HOGENOM" id="CLU_223054_0_0_1"/>
<dbReference type="InParanoid" id="C7ZBE4"/>
<dbReference type="OMA" id="MIEFEQT"/>
<dbReference type="OrthoDB" id="416786at2759"/>
<dbReference type="Proteomes" id="UP000005206">
    <property type="component" value="Unassembled WGS sequence"/>
</dbReference>
<dbReference type="GO" id="GO:0005737">
    <property type="term" value="C:cytoplasm"/>
    <property type="evidence" value="ECO:0007669"/>
    <property type="project" value="TreeGrafter"/>
</dbReference>
<dbReference type="GO" id="GO:0016853">
    <property type="term" value="F:isomerase activity"/>
    <property type="evidence" value="ECO:0007669"/>
    <property type="project" value="UniProtKB-KW"/>
</dbReference>
<dbReference type="GO" id="GO:0016874">
    <property type="term" value="F:ligase activity"/>
    <property type="evidence" value="ECO:0007669"/>
    <property type="project" value="UniProtKB-KW"/>
</dbReference>
<dbReference type="GO" id="GO:0031177">
    <property type="term" value="F:phosphopantetheine binding"/>
    <property type="evidence" value="ECO:0007669"/>
    <property type="project" value="InterPro"/>
</dbReference>
<dbReference type="GO" id="GO:0043041">
    <property type="term" value="P:amino acid activation for nonribosomal peptide biosynthetic process"/>
    <property type="evidence" value="ECO:0007669"/>
    <property type="project" value="TreeGrafter"/>
</dbReference>
<dbReference type="GO" id="GO:0044550">
    <property type="term" value="P:secondary metabolite biosynthetic process"/>
    <property type="evidence" value="ECO:0007669"/>
    <property type="project" value="TreeGrafter"/>
</dbReference>
<dbReference type="CDD" id="cd05930">
    <property type="entry name" value="A_NRPS"/>
    <property type="match status" value="1"/>
</dbReference>
<dbReference type="CDD" id="cd05918">
    <property type="entry name" value="A_NRPS_SidN3_like"/>
    <property type="match status" value="4"/>
</dbReference>
<dbReference type="CDD" id="cd19542">
    <property type="entry name" value="CT_NRPS-like"/>
    <property type="match status" value="1"/>
</dbReference>
<dbReference type="CDD" id="cd19545">
    <property type="entry name" value="FUM14_C_NRPS-like"/>
    <property type="match status" value="3"/>
</dbReference>
<dbReference type="CDD" id="cd19531">
    <property type="entry name" value="LCL_NRPS-like"/>
    <property type="match status" value="1"/>
</dbReference>
<dbReference type="FunFam" id="3.30.300.30:FF:000015">
    <property type="entry name" value="Nonribosomal peptide synthase SidD"/>
    <property type="match status" value="5"/>
</dbReference>
<dbReference type="FunFam" id="3.30.559.30:FF:000003">
    <property type="entry name" value="Nonribosomal peptide synthase SidD"/>
    <property type="match status" value="3"/>
</dbReference>
<dbReference type="FunFam" id="1.10.1200.10:FF:000005">
    <property type="entry name" value="Nonribosomal peptide synthetase 1"/>
    <property type="match status" value="4"/>
</dbReference>
<dbReference type="FunFam" id="3.40.50.12780:FF:000014">
    <property type="entry name" value="Nonribosomal peptide synthetase 1"/>
    <property type="match status" value="1"/>
</dbReference>
<dbReference type="Gene3D" id="3.30.300.30">
    <property type="match status" value="5"/>
</dbReference>
<dbReference type="Gene3D" id="3.40.50.980">
    <property type="match status" value="2"/>
</dbReference>
<dbReference type="Gene3D" id="1.10.1200.10">
    <property type="entry name" value="ACP-like"/>
    <property type="match status" value="5"/>
</dbReference>
<dbReference type="Gene3D" id="3.30.559.10">
    <property type="entry name" value="Chloramphenicol acetyltransferase-like domain"/>
    <property type="match status" value="5"/>
</dbReference>
<dbReference type="Gene3D" id="2.30.38.10">
    <property type="entry name" value="Luciferase, Domain 3"/>
    <property type="match status" value="1"/>
</dbReference>
<dbReference type="Gene3D" id="3.40.50.12780">
    <property type="entry name" value="N-terminal domain of ligase-like"/>
    <property type="match status" value="4"/>
</dbReference>
<dbReference type="Gene3D" id="3.30.559.30">
    <property type="entry name" value="Nonribosomal peptide synthetase, condensation domain"/>
    <property type="match status" value="6"/>
</dbReference>
<dbReference type="InterPro" id="IPR010071">
    <property type="entry name" value="AA_adenyl_dom"/>
</dbReference>
<dbReference type="InterPro" id="IPR036736">
    <property type="entry name" value="ACP-like_sf"/>
</dbReference>
<dbReference type="InterPro" id="IPR025110">
    <property type="entry name" value="AMP-bd_C"/>
</dbReference>
<dbReference type="InterPro" id="IPR045851">
    <property type="entry name" value="AMP-bd_C_sf"/>
</dbReference>
<dbReference type="InterPro" id="IPR020845">
    <property type="entry name" value="AMP-binding_CS"/>
</dbReference>
<dbReference type="InterPro" id="IPR000873">
    <property type="entry name" value="AMP-dep_synth/lig_dom"/>
</dbReference>
<dbReference type="InterPro" id="IPR042099">
    <property type="entry name" value="ANL_N_sf"/>
</dbReference>
<dbReference type="InterPro" id="IPR023213">
    <property type="entry name" value="CAT-like_dom_sf"/>
</dbReference>
<dbReference type="InterPro" id="IPR001242">
    <property type="entry name" value="Condensatn"/>
</dbReference>
<dbReference type="InterPro" id="IPR020806">
    <property type="entry name" value="PKS_PP-bd"/>
</dbReference>
<dbReference type="InterPro" id="IPR009081">
    <property type="entry name" value="PP-bd_ACP"/>
</dbReference>
<dbReference type="InterPro" id="IPR006162">
    <property type="entry name" value="Ppantetheine_attach_site"/>
</dbReference>
<dbReference type="NCBIfam" id="TIGR01733">
    <property type="entry name" value="AA-adenyl-dom"/>
    <property type="match status" value="5"/>
</dbReference>
<dbReference type="NCBIfam" id="NF003417">
    <property type="entry name" value="PRK04813.1"/>
    <property type="match status" value="5"/>
</dbReference>
<dbReference type="PANTHER" id="PTHR45527">
    <property type="entry name" value="NONRIBOSOMAL PEPTIDE SYNTHETASE"/>
    <property type="match status" value="1"/>
</dbReference>
<dbReference type="PANTHER" id="PTHR45527:SF3">
    <property type="entry name" value="SIDEROPHORE SYNTHETASE (EUROFUNG)"/>
    <property type="match status" value="1"/>
</dbReference>
<dbReference type="Pfam" id="PF00501">
    <property type="entry name" value="AMP-binding"/>
    <property type="match status" value="5"/>
</dbReference>
<dbReference type="Pfam" id="PF13193">
    <property type="entry name" value="AMP-binding_C"/>
    <property type="match status" value="1"/>
</dbReference>
<dbReference type="Pfam" id="PF00668">
    <property type="entry name" value="Condensation"/>
    <property type="match status" value="5"/>
</dbReference>
<dbReference type="Pfam" id="PF00550">
    <property type="entry name" value="PP-binding"/>
    <property type="match status" value="5"/>
</dbReference>
<dbReference type="SMART" id="SM00823">
    <property type="entry name" value="PKS_PP"/>
    <property type="match status" value="5"/>
</dbReference>
<dbReference type="SUPFAM" id="SSF56801">
    <property type="entry name" value="Acetyl-CoA synthetase-like"/>
    <property type="match status" value="5"/>
</dbReference>
<dbReference type="SUPFAM" id="SSF47336">
    <property type="entry name" value="ACP-like"/>
    <property type="match status" value="5"/>
</dbReference>
<dbReference type="SUPFAM" id="SSF52777">
    <property type="entry name" value="CoA-dependent acyltransferases"/>
    <property type="match status" value="11"/>
</dbReference>
<dbReference type="PROSITE" id="PS00455">
    <property type="entry name" value="AMP_BINDING"/>
    <property type="match status" value="4"/>
</dbReference>
<dbReference type="PROSITE" id="PS50075">
    <property type="entry name" value="CARRIER"/>
    <property type="match status" value="5"/>
</dbReference>
<dbReference type="PROSITE" id="PS00012">
    <property type="entry name" value="PHOSPHOPANTETHEINE"/>
    <property type="match status" value="5"/>
</dbReference>
<evidence type="ECO:0000255" key="1"/>
<evidence type="ECO:0000255" key="2">
    <source>
        <dbReference type="PROSITE-ProRule" id="PRU00258"/>
    </source>
</evidence>
<evidence type="ECO:0000256" key="3">
    <source>
        <dbReference type="SAM" id="MobiDB-lite"/>
    </source>
</evidence>
<evidence type="ECO:0000269" key="4">
    <source>
    </source>
</evidence>
<evidence type="ECO:0000303" key="5">
    <source>
    </source>
</evidence>
<evidence type="ECO:0000305" key="6"/>
<evidence type="ECO:0000305" key="7">
    <source>
    </source>
</evidence>
<proteinExistence type="inferred from homology"/>
<protein>
    <recommendedName>
        <fullName evidence="5">Nonribosomal peptide synthetase 30</fullName>
        <ecNumber evidence="4">6.3.2.-</ecNumber>
    </recommendedName>
    <alternativeName>
        <fullName evidence="5">Sansalvamide biosynthesis cluster protein NRPS30</fullName>
    </alternativeName>
</protein>